<name>EX7L_ZYMMO</name>
<feature type="chain" id="PRO_0000197908" description="Exodeoxyribonuclease 7 large subunit">
    <location>
        <begin position="1"/>
        <end position="544"/>
    </location>
</feature>
<feature type="region of interest" description="Disordered" evidence="2">
    <location>
        <begin position="522"/>
        <end position="544"/>
    </location>
</feature>
<feature type="sequence conflict" description="In Ref. 1; AAG02155." evidence="3" ref="1">
    <original>G</original>
    <variation>R</variation>
    <location>
        <position position="59"/>
    </location>
</feature>
<feature type="sequence conflict" description="In Ref. 1; AAG02155." evidence="3" ref="1">
    <original>C</original>
    <variation>Y</variation>
    <location>
        <position position="448"/>
    </location>
</feature>
<accession>Q9FDL4</accession>
<accession>Q5NQT0</accession>
<dbReference type="EC" id="3.1.11.6" evidence="1"/>
<dbReference type="EMBL" id="AF212041">
    <property type="protein sequence ID" value="AAG02155.1"/>
    <property type="molecule type" value="Genomic_DNA"/>
</dbReference>
<dbReference type="EMBL" id="AE008692">
    <property type="protein sequence ID" value="AAV88924.1"/>
    <property type="molecule type" value="Genomic_DNA"/>
</dbReference>
<dbReference type="RefSeq" id="WP_011240235.1">
    <property type="nucleotide sequence ID" value="NZ_CP035711.1"/>
</dbReference>
<dbReference type="SMR" id="Q9FDL4"/>
<dbReference type="STRING" id="264203.ZMO0300"/>
<dbReference type="KEGG" id="zmo:ZMO0300"/>
<dbReference type="eggNOG" id="COG1570">
    <property type="taxonomic scope" value="Bacteria"/>
</dbReference>
<dbReference type="HOGENOM" id="CLU_023625_3_1_5"/>
<dbReference type="Proteomes" id="UP000001173">
    <property type="component" value="Chromosome"/>
</dbReference>
<dbReference type="GO" id="GO:0005737">
    <property type="term" value="C:cytoplasm"/>
    <property type="evidence" value="ECO:0007669"/>
    <property type="project" value="UniProtKB-SubCell"/>
</dbReference>
<dbReference type="GO" id="GO:0009318">
    <property type="term" value="C:exodeoxyribonuclease VII complex"/>
    <property type="evidence" value="ECO:0007669"/>
    <property type="project" value="InterPro"/>
</dbReference>
<dbReference type="GO" id="GO:0008855">
    <property type="term" value="F:exodeoxyribonuclease VII activity"/>
    <property type="evidence" value="ECO:0007669"/>
    <property type="project" value="UniProtKB-UniRule"/>
</dbReference>
<dbReference type="GO" id="GO:0003676">
    <property type="term" value="F:nucleic acid binding"/>
    <property type="evidence" value="ECO:0007669"/>
    <property type="project" value="InterPro"/>
</dbReference>
<dbReference type="GO" id="GO:0006308">
    <property type="term" value="P:DNA catabolic process"/>
    <property type="evidence" value="ECO:0007669"/>
    <property type="project" value="UniProtKB-UniRule"/>
</dbReference>
<dbReference type="CDD" id="cd04489">
    <property type="entry name" value="ExoVII_LU_OBF"/>
    <property type="match status" value="1"/>
</dbReference>
<dbReference type="HAMAP" id="MF_00378">
    <property type="entry name" value="Exonuc_7_L"/>
    <property type="match status" value="1"/>
</dbReference>
<dbReference type="InterPro" id="IPR003753">
    <property type="entry name" value="Exonuc_VII_L"/>
</dbReference>
<dbReference type="InterPro" id="IPR020579">
    <property type="entry name" value="Exonuc_VII_lsu_C"/>
</dbReference>
<dbReference type="InterPro" id="IPR025824">
    <property type="entry name" value="OB-fold_nuc-bd_dom"/>
</dbReference>
<dbReference type="NCBIfam" id="TIGR00237">
    <property type="entry name" value="xseA"/>
    <property type="match status" value="1"/>
</dbReference>
<dbReference type="PANTHER" id="PTHR30008">
    <property type="entry name" value="EXODEOXYRIBONUCLEASE 7 LARGE SUBUNIT"/>
    <property type="match status" value="1"/>
</dbReference>
<dbReference type="PANTHER" id="PTHR30008:SF0">
    <property type="entry name" value="EXODEOXYRIBONUCLEASE 7 LARGE SUBUNIT"/>
    <property type="match status" value="1"/>
</dbReference>
<dbReference type="Pfam" id="PF02601">
    <property type="entry name" value="Exonuc_VII_L"/>
    <property type="match status" value="2"/>
</dbReference>
<dbReference type="Pfam" id="PF13742">
    <property type="entry name" value="tRNA_anti_2"/>
    <property type="match status" value="1"/>
</dbReference>
<keyword id="KW-0963">Cytoplasm</keyword>
<keyword id="KW-0269">Exonuclease</keyword>
<keyword id="KW-0378">Hydrolase</keyword>
<keyword id="KW-0540">Nuclease</keyword>
<keyword id="KW-1185">Reference proteome</keyword>
<organism>
    <name type="scientific">Zymomonas mobilis subsp. mobilis (strain ATCC 31821 / ZM4 / CP4)</name>
    <dbReference type="NCBI Taxonomy" id="264203"/>
    <lineage>
        <taxon>Bacteria</taxon>
        <taxon>Pseudomonadati</taxon>
        <taxon>Pseudomonadota</taxon>
        <taxon>Alphaproteobacteria</taxon>
        <taxon>Sphingomonadales</taxon>
        <taxon>Zymomonadaceae</taxon>
        <taxon>Zymomonas</taxon>
    </lineage>
</organism>
<reference key="1">
    <citation type="submission" date="1999-12" db="EMBL/GenBank/DDBJ databases">
        <authorList>
            <person name="Lee H.J."/>
            <person name="Kang H.S."/>
        </authorList>
    </citation>
    <scope>NUCLEOTIDE SEQUENCE [GENOMIC DNA]</scope>
    <source>
        <strain>ATCC 31821 / ZM4 / CP4</strain>
    </source>
</reference>
<reference key="2">
    <citation type="journal article" date="2005" name="Nat. Biotechnol.">
        <title>The genome sequence of the ethanologenic bacterium Zymomonas mobilis ZM4.</title>
        <authorList>
            <person name="Seo J.-S."/>
            <person name="Chong H."/>
            <person name="Park H.S."/>
            <person name="Yoon K.-O."/>
            <person name="Jung C."/>
            <person name="Kim J.J."/>
            <person name="Hong J.H."/>
            <person name="Kim H."/>
            <person name="Kim J.-H."/>
            <person name="Kil J.-I."/>
            <person name="Park C.J."/>
            <person name="Oh H.-M."/>
            <person name="Lee J.-S."/>
            <person name="Jin S.-J."/>
            <person name="Um H.-W."/>
            <person name="Lee H.-J."/>
            <person name="Oh S.-J."/>
            <person name="Kim J.Y."/>
            <person name="Kang H.L."/>
            <person name="Lee S.Y."/>
            <person name="Lee K.J."/>
            <person name="Kang H.S."/>
        </authorList>
    </citation>
    <scope>NUCLEOTIDE SEQUENCE [LARGE SCALE GENOMIC DNA]</scope>
    <source>
        <strain>ATCC 31821 / ZM4 / CP4</strain>
    </source>
</reference>
<proteinExistence type="inferred from homology"/>
<evidence type="ECO:0000255" key="1">
    <source>
        <dbReference type="HAMAP-Rule" id="MF_00378"/>
    </source>
</evidence>
<evidence type="ECO:0000256" key="2">
    <source>
        <dbReference type="SAM" id="MobiDB-lite"/>
    </source>
</evidence>
<evidence type="ECO:0000305" key="3"/>
<gene>
    <name evidence="1" type="primary">xseA</name>
    <name type="ordered locus">ZMO0300</name>
</gene>
<comment type="function">
    <text evidence="1">Bidirectionally degrades single-stranded DNA into large acid-insoluble oligonucleotides, which are then degraded further into small acid-soluble oligonucleotides.</text>
</comment>
<comment type="catalytic activity">
    <reaction evidence="1">
        <text>Exonucleolytic cleavage in either 5'- to 3'- or 3'- to 5'-direction to yield nucleoside 5'-phosphates.</text>
        <dbReference type="EC" id="3.1.11.6"/>
    </reaction>
</comment>
<comment type="subunit">
    <text evidence="1">Heterooligomer composed of large and small subunits.</text>
</comment>
<comment type="subcellular location">
    <subcellularLocation>
        <location evidence="1">Cytoplasm</location>
    </subcellularLocation>
</comment>
<comment type="similarity">
    <text evidence="1">Belongs to the XseA family.</text>
</comment>
<protein>
    <recommendedName>
        <fullName evidence="1">Exodeoxyribonuclease 7 large subunit</fullName>
        <ecNumber evidence="1">3.1.11.6</ecNumber>
    </recommendedName>
    <alternativeName>
        <fullName evidence="1">Exodeoxyribonuclease VII large subunit</fullName>
        <shortName evidence="1">Exonuclease VII large subunit</shortName>
    </alternativeName>
</protein>
<sequence length="544" mass="60593">MNSFSFDGSDLLAKSDATDNVRAFSVSEISGALKRTVEDAFSHIRVRGEISGFTQAGSGHCYLALKDDKAVLDSVIWRGVVSRISFRPENGMEVIATGRLTTYAGRSRYQLVIEQLEIAGQGALMALLDRRRRMLAEEGLFNADRKRALPFMPKIIGVVSSPSGAVIRDILHRLADRCPTHVILWPVPVQGDQAAAKVAAAVRGFSALKAGDAIPRPDLLIVARGGGSLEDLWPFNEEILVRAVAESSIPVISAVGHETDTTLCDYAADLRAPTPTAAAELAVPVRSELVNGLNNLHLRMNNAIARHAKLSEERLEAVRRRLPDGERLLAPFIQLFDDRASQLERDISERMTHARHKLNFYAATLRPALLQARIAREQARLSACRLPTGQRLVIQEQQKLDNVTRRLKQAYQQRLSHADLRFKFLAEKLQPLLLEQRWQQKAELLAACSLKPELVTARLNIWQKNIDQLWRVAEQAHPDKILAKGYARVEDSHSHVVSNAHDAKTHKRLNLIFHDGSVWVAPETPPKSRKADNPPEPPEQTSFL</sequence>